<evidence type="ECO:0000255" key="1"/>
<evidence type="ECO:0000269" key="2">
    <source>
    </source>
</evidence>
<evidence type="ECO:0000303" key="3">
    <source>
    </source>
</evidence>
<evidence type="ECO:0000305" key="4"/>
<evidence type="ECO:0000305" key="5">
    <source>
    </source>
</evidence>
<dbReference type="EMBL" id="AB121203">
    <property type="protein sequence ID" value="BAD13410.1"/>
    <property type="molecule type" value="mRNA"/>
</dbReference>
<dbReference type="SMR" id="P83562"/>
<dbReference type="ArachnoServer" id="AS000386">
    <property type="toxin name" value="U7-hextatoxin-Mg1a"/>
</dbReference>
<dbReference type="GO" id="GO:0005576">
    <property type="term" value="C:extracellular region"/>
    <property type="evidence" value="ECO:0007669"/>
    <property type="project" value="UniProtKB-SubCell"/>
</dbReference>
<dbReference type="GO" id="GO:0090729">
    <property type="term" value="F:toxin activity"/>
    <property type="evidence" value="ECO:0007669"/>
    <property type="project" value="UniProtKB-KW"/>
</dbReference>
<reference key="1">
    <citation type="submission" date="2003-09" db="EMBL/GenBank/DDBJ databases">
        <authorList>
            <person name="Satake H."/>
            <person name="Villegas E."/>
            <person name="Corzo G."/>
        </authorList>
    </citation>
    <scope>NUCLEOTIDE SEQUENCE [MRNA]</scope>
    <source>
        <tissue>Venom gland</tissue>
    </source>
</reference>
<reference key="2">
    <citation type="journal article" date="2003" name="FEBS Lett.">
        <title>Distinct primary structures of the major peptide toxins from the venom of the spider Macrothele gigas that bind to sites 3 and 4 in the sodium channel.</title>
        <authorList>
            <person name="Corzo G."/>
            <person name="Gilles N."/>
            <person name="Satake H."/>
            <person name="Villegas E."/>
            <person name="Dai L."/>
            <person name="Nakajima T."/>
            <person name="Haupt J."/>
        </authorList>
    </citation>
    <scope>PROTEIN SEQUENCE OF 45-80</scope>
    <scope>FUNCTION</scope>
    <scope>SUBCELLULAR LOCATION</scope>
    <scope>TISSUE SPECIFICITY</scope>
    <scope>TOXIC DOSE</scope>
    <scope>AMIDATION AT ARG-80</scope>
    <scope>MASS SPECTROMETRY</scope>
    <scope>DISULFIDE BONDS</scope>
    <source>
        <tissue>Venom</tissue>
    </source>
</reference>
<reference key="3">
    <citation type="journal article" date="2009" name="Toxicon">
        <title>Expression of a spider venom peptide in transgenic tobacco confers insect resistance.</title>
        <authorList>
            <person name="Hernandez-Campuzano B."/>
            <person name="Suarez R."/>
            <person name="Lina L."/>
            <person name="Hernandez V."/>
            <person name="Villegas E."/>
            <person name="Corzo G."/>
            <person name="Iturriaga G."/>
        </authorList>
    </citation>
    <scope>TRANSGENIC PROTECTION OF PLANTS</scope>
</reference>
<proteinExistence type="evidence at protein level"/>
<keyword id="KW-0027">Amidation</keyword>
<keyword id="KW-0903">Direct protein sequencing</keyword>
<keyword id="KW-1015">Disulfide bond</keyword>
<keyword id="KW-0960">Knottin</keyword>
<keyword id="KW-0528">Neurotoxin</keyword>
<keyword id="KW-0964">Secreted</keyword>
<keyword id="KW-0732">Signal</keyword>
<keyword id="KW-0800">Toxin</keyword>
<organism>
    <name type="scientific">Macrothele gigas</name>
    <name type="common">Japanese funnel web spider</name>
    <dbReference type="NCBI Taxonomy" id="223896"/>
    <lineage>
        <taxon>Eukaryota</taxon>
        <taxon>Metazoa</taxon>
        <taxon>Ecdysozoa</taxon>
        <taxon>Arthropoda</taxon>
        <taxon>Chelicerata</taxon>
        <taxon>Arachnida</taxon>
        <taxon>Araneae</taxon>
        <taxon>Mygalomorphae</taxon>
        <taxon>Macrothelidae</taxon>
        <taxon>Macrothele</taxon>
    </lineage>
</organism>
<sequence>MRTIVFLIVSILLLSSAVLMLAEGNAASHELQEYPIEESLEEQRKCVDGSCDPYSSDAPRCCGSQICQCIFFVPCYCKYRGK</sequence>
<protein>
    <recommendedName>
        <fullName>U7-hexatoxin-Mg1a</fullName>
        <shortName>U7-HXTX-Mg1a</shortName>
    </recommendedName>
    <alternativeName>
        <fullName evidence="3">Neurotoxin magi-6</fullName>
    </alternativeName>
</protein>
<feature type="signal peptide" evidence="1">
    <location>
        <begin position="1"/>
        <end position="26"/>
    </location>
</feature>
<feature type="propeptide" id="PRO_0000035590" evidence="2">
    <location>
        <begin position="27"/>
        <end position="44"/>
    </location>
</feature>
<feature type="chain" id="PRO_0000035591" description="U7-hexatoxin-Mg1a" evidence="2">
    <location>
        <begin position="45"/>
        <end position="80"/>
    </location>
</feature>
<feature type="modified residue" description="Arginine amide" evidence="2">
    <location>
        <position position="80"/>
    </location>
</feature>
<feature type="disulfide bond" evidence="5">
    <location>
        <begin position="46"/>
        <end position="62"/>
    </location>
</feature>
<feature type="disulfide bond" evidence="5">
    <location>
        <begin position="51"/>
        <end position="67"/>
    </location>
</feature>
<feature type="disulfide bond" evidence="5">
    <location>
        <begin position="61"/>
        <end position="77"/>
    </location>
</feature>
<feature type="disulfide bond" evidence="5">
    <location>
        <begin position="69"/>
        <end position="75"/>
    </location>
</feature>
<name>TXMG6_MACGS</name>
<comment type="function">
    <text evidence="2">Induces flaccid paralysis when injected into lepidopteran larvae. Intracranial injection into mice causes awkwardness of movement and laboured respiration until death.</text>
</comment>
<comment type="subcellular location">
    <subcellularLocation>
        <location evidence="2 4">Secreted</location>
    </subcellularLocation>
</comment>
<comment type="tissue specificity">
    <text evidence="2 4">Expressed by the venom gland.</text>
</comment>
<comment type="domain">
    <text evidence="4">The presence of a 'disulfide through disulfide knot' structurally defines this protein as a knottin.</text>
</comment>
<comment type="mass spectrometry"/>
<comment type="toxic dose">
    <text evidence="2">LD(50) is 3.1 nmol/kg in lepidopteran larvae.</text>
</comment>
<comment type="toxic dose">
    <text evidence="2">LD(50) is 0.74 pmol/g by intracranial injection into mice.</text>
</comment>
<comment type="miscellaneous">
    <text>When expressed in tobacco plants, the toxin induces a significant resistance to the insect S.frugiperda.</text>
</comment>
<comment type="similarity">
    <text>Belongs to the rTX family.</text>
</comment>
<accession>P83562</accession>
<accession>Q75WG8</accession>